<gene>
    <name evidence="1" type="primary">grcA</name>
    <name type="ordered locus">HSM_1791</name>
</gene>
<keyword id="KW-0556">Organic radical</keyword>
<name>GRCA_HISS2</name>
<organism>
    <name type="scientific">Histophilus somni (strain 2336)</name>
    <name type="common">Haemophilus somnus</name>
    <dbReference type="NCBI Taxonomy" id="228400"/>
    <lineage>
        <taxon>Bacteria</taxon>
        <taxon>Pseudomonadati</taxon>
        <taxon>Pseudomonadota</taxon>
        <taxon>Gammaproteobacteria</taxon>
        <taxon>Pasteurellales</taxon>
        <taxon>Pasteurellaceae</taxon>
        <taxon>Histophilus</taxon>
    </lineage>
</organism>
<evidence type="ECO:0000255" key="1">
    <source>
        <dbReference type="HAMAP-Rule" id="MF_00806"/>
    </source>
</evidence>
<dbReference type="EMBL" id="CP000947">
    <property type="protein sequence ID" value="ACA31575.1"/>
    <property type="molecule type" value="Genomic_DNA"/>
</dbReference>
<dbReference type="RefSeq" id="WP_011608637.1">
    <property type="nucleotide sequence ID" value="NC_010519.1"/>
</dbReference>
<dbReference type="SMR" id="B0UWA8"/>
<dbReference type="STRING" id="228400.HSM_1791"/>
<dbReference type="GeneID" id="31488098"/>
<dbReference type="KEGG" id="hsm:HSM_1791"/>
<dbReference type="HOGENOM" id="CLU_133780_0_0_6"/>
<dbReference type="GO" id="GO:0005829">
    <property type="term" value="C:cytosol"/>
    <property type="evidence" value="ECO:0007669"/>
    <property type="project" value="TreeGrafter"/>
</dbReference>
<dbReference type="GO" id="GO:0008861">
    <property type="term" value="F:formate C-acetyltransferase activity"/>
    <property type="evidence" value="ECO:0007669"/>
    <property type="project" value="TreeGrafter"/>
</dbReference>
<dbReference type="FunFam" id="3.20.70.20:FF:000002">
    <property type="entry name" value="Autonomous glycyl radical cofactor"/>
    <property type="match status" value="1"/>
</dbReference>
<dbReference type="Gene3D" id="3.20.70.20">
    <property type="match status" value="1"/>
</dbReference>
<dbReference type="HAMAP" id="MF_00806">
    <property type="entry name" value="GrcA"/>
    <property type="match status" value="1"/>
</dbReference>
<dbReference type="InterPro" id="IPR050244">
    <property type="entry name" value="Auton_GlycylRad_Cofactor"/>
</dbReference>
<dbReference type="InterPro" id="IPR019777">
    <property type="entry name" value="Form_AcTrfase_GR_CS"/>
</dbReference>
<dbReference type="InterPro" id="IPR001150">
    <property type="entry name" value="Gly_radical"/>
</dbReference>
<dbReference type="InterPro" id="IPR011140">
    <property type="entry name" value="Glycyl_radical_cofactor_GrcA"/>
</dbReference>
<dbReference type="NCBIfam" id="TIGR04365">
    <property type="entry name" value="spare_glycyl"/>
    <property type="match status" value="1"/>
</dbReference>
<dbReference type="PANTHER" id="PTHR30191">
    <property type="entry name" value="FORMATE ACETYLTRANSFERASE"/>
    <property type="match status" value="1"/>
</dbReference>
<dbReference type="PANTHER" id="PTHR30191:SF0">
    <property type="entry name" value="FORMATE ACETYLTRANSFERASE 1"/>
    <property type="match status" value="1"/>
</dbReference>
<dbReference type="Pfam" id="PF01228">
    <property type="entry name" value="Gly_radical"/>
    <property type="match status" value="1"/>
</dbReference>
<dbReference type="PIRSF" id="PIRSF000378">
    <property type="entry name" value="Gly_radicl_yfiD"/>
    <property type="match status" value="1"/>
</dbReference>
<dbReference type="SUPFAM" id="SSF51998">
    <property type="entry name" value="PFL-like glycyl radical enzymes"/>
    <property type="match status" value="1"/>
</dbReference>
<dbReference type="PROSITE" id="PS00850">
    <property type="entry name" value="GLY_RADICAL_1"/>
    <property type="match status" value="1"/>
</dbReference>
<dbReference type="PROSITE" id="PS51149">
    <property type="entry name" value="GLY_RADICAL_2"/>
    <property type="match status" value="1"/>
</dbReference>
<sequence length="127" mass="14286">MIKGIQITQAANDNLLNSFWLLDSEKGEARCLAAKAEFVEDQIVAVSELGQIEYRELPVDVAPTIKVEGGQHLNVNVLRRETLEDAVNNPEKYPQLTIRVSGYAVRFNSLTPEQQRDVITRTFTQSL</sequence>
<feature type="chain" id="PRO_1000083727" description="Autonomous glycyl radical cofactor">
    <location>
        <begin position="1"/>
        <end position="127"/>
    </location>
</feature>
<feature type="domain" description="Glycine radical" evidence="1">
    <location>
        <begin position="5"/>
        <end position="127"/>
    </location>
</feature>
<feature type="modified residue" description="Glycine radical" evidence="1">
    <location>
        <position position="102"/>
    </location>
</feature>
<reference key="1">
    <citation type="submission" date="2008-02" db="EMBL/GenBank/DDBJ databases">
        <title>Complete sequence of Haemophilus somnus 2336.</title>
        <authorList>
            <consortium name="US DOE Joint Genome Institute"/>
            <person name="Siddaramappa S."/>
            <person name="Duncan A.J."/>
            <person name="Challacombe J.F."/>
            <person name="Rainey D."/>
            <person name="Gillaspy A.F."/>
            <person name="Carson M."/>
            <person name="Gipson J."/>
            <person name="Gipson M."/>
            <person name="Bruce D."/>
            <person name="Detter J.C."/>
            <person name="Han C.S."/>
            <person name="Land M."/>
            <person name="Tapia R."/>
            <person name="Thompson L.S."/>
            <person name="Orvis J."/>
            <person name="Zaitshik J."/>
            <person name="Barnes G."/>
            <person name="Brettin T.S."/>
            <person name="Dyer D.W."/>
            <person name="Inzana T.J."/>
        </authorList>
    </citation>
    <scope>NUCLEOTIDE SEQUENCE [LARGE SCALE GENOMIC DNA]</scope>
    <source>
        <strain>2336</strain>
    </source>
</reference>
<proteinExistence type="inferred from homology"/>
<accession>B0UWA8</accession>
<comment type="function">
    <text evidence="1">Acts as a radical domain for damaged PFL and possibly other radical proteins.</text>
</comment>
<protein>
    <recommendedName>
        <fullName evidence="1">Autonomous glycyl radical cofactor</fullName>
    </recommendedName>
</protein>